<feature type="chain" id="PRO_0000075754" description="Insulin gene enhancer protein ISL-2">
    <location>
        <begin position="1"/>
        <end position="360"/>
    </location>
</feature>
<feature type="domain" description="LIM zinc-binding 1" evidence="4">
    <location>
        <begin position="25"/>
        <end position="86"/>
    </location>
</feature>
<feature type="domain" description="LIM zinc-binding 2" evidence="4">
    <location>
        <begin position="87"/>
        <end position="149"/>
    </location>
</feature>
<feature type="DNA-binding region" description="Homeobox" evidence="3">
    <location>
        <begin position="192"/>
        <end position="251"/>
    </location>
</feature>
<feature type="region of interest" description="Disordered" evidence="5">
    <location>
        <begin position="151"/>
        <end position="177"/>
    </location>
</feature>
<feature type="region of interest" description="LIM-binding domain (LID)" evidence="1">
    <location>
        <begin position="273"/>
        <end position="302"/>
    </location>
</feature>
<feature type="region of interest" description="Disordered" evidence="5">
    <location>
        <begin position="328"/>
        <end position="360"/>
    </location>
</feature>
<feature type="compositionally biased region" description="Low complexity" evidence="5">
    <location>
        <begin position="328"/>
        <end position="337"/>
    </location>
</feature>
<feature type="compositionally biased region" description="Polar residues" evidence="5">
    <location>
        <begin position="338"/>
        <end position="360"/>
    </location>
</feature>
<feature type="modified residue" description="Phosphoserine" evidence="2">
    <location>
        <position position="154"/>
    </location>
</feature>
<feature type="modified residue" description="Phosphoserine" evidence="2">
    <location>
        <position position="157"/>
    </location>
</feature>
<feature type="modified residue" description="Phosphoserine" evidence="2">
    <location>
        <position position="280"/>
    </location>
</feature>
<feature type="helix" evidence="6">
    <location>
        <begin position="201"/>
        <end position="213"/>
    </location>
</feature>
<feature type="helix" evidence="6">
    <location>
        <begin position="219"/>
        <end position="229"/>
    </location>
</feature>
<feature type="helix" evidence="6">
    <location>
        <begin position="233"/>
        <end position="246"/>
    </location>
</feature>
<sequence>MVDIIFHYPFLGAMGDHSKKKPGTAMCVGCGSQIHDQFILRVSPDLEWHAACLKCAECSQYLDETCTCFVRDGKTYCKRDYVRLFGIKCAQCQVGFSSSDLVMRARDSVYHIECFRCSVCSRQLLPGDEFSLREHELLCRADHGLLLERAAAGSPRSPGPLPGTPPGLHLPDAGSGQQVSLRTHVHKQAEKTTRVRTVLNEKQLHTLRTCYAANPRPDALMKEQLVEMTGLSPRVIRVWFQNKRCKDKKKSILMKQLQQQQHSDKASLQGLTGTLLVAGSPSAHENAVQGSAVEVQTYQPPWKALSEFALQSDLDQPAFQQLVSFSESGSLGNSSGSDVTSLSSQLPDTPNSMVPSPVET</sequence>
<organism>
    <name type="scientific">Rattus norvegicus</name>
    <name type="common">Rat</name>
    <dbReference type="NCBI Taxonomy" id="10116"/>
    <lineage>
        <taxon>Eukaryota</taxon>
        <taxon>Metazoa</taxon>
        <taxon>Chordata</taxon>
        <taxon>Craniata</taxon>
        <taxon>Vertebrata</taxon>
        <taxon>Euteleostomi</taxon>
        <taxon>Mammalia</taxon>
        <taxon>Eutheria</taxon>
        <taxon>Euarchontoglires</taxon>
        <taxon>Glires</taxon>
        <taxon>Rodentia</taxon>
        <taxon>Myomorpha</taxon>
        <taxon>Muroidea</taxon>
        <taxon>Muridae</taxon>
        <taxon>Murinae</taxon>
        <taxon>Rattus</taxon>
    </lineage>
</organism>
<reference key="1">
    <citation type="journal article" date="1994" name="Cell">
        <title>Topographic organization of embryonic motor neurons defined by expression of LIM homeobox genes.</title>
        <authorList>
            <person name="Tsuchida T."/>
            <person name="Ensini M."/>
            <person name="Morton S.B."/>
            <person name="Baldassare M."/>
            <person name="Edlund T."/>
            <person name="Jessell T.M."/>
            <person name="Pfaff S.L."/>
        </authorList>
    </citation>
    <scope>NUCLEOTIDE SEQUENCE [MRNA]</scope>
    <source>
        <tissue>Spinal cord</tissue>
    </source>
</reference>
<reference key="2">
    <citation type="journal article" date="1999" name="J. Mol. Biol.">
        <title>The solution structure of the homeodomain of the rat insulin-gene enhancer protein Isl-1. Comparison with other homeodomains.</title>
        <authorList>
            <person name="Ippel H."/>
            <person name="Larsson G."/>
            <person name="Behravan G."/>
            <person name="Zdunek J."/>
            <person name="Lundqvist M."/>
            <person name="Schleucher J."/>
            <person name="Lycksell P.-O."/>
            <person name="Wijmenga S."/>
        </authorList>
    </citation>
    <scope>STRUCTURE BY NMR OF 180-244</scope>
</reference>
<evidence type="ECO:0000250" key="1"/>
<evidence type="ECO:0000250" key="2">
    <source>
        <dbReference type="UniProtKB" id="Q96A47"/>
    </source>
</evidence>
<evidence type="ECO:0000255" key="3">
    <source>
        <dbReference type="PROSITE-ProRule" id="PRU00108"/>
    </source>
</evidence>
<evidence type="ECO:0000255" key="4">
    <source>
        <dbReference type="PROSITE-ProRule" id="PRU00125"/>
    </source>
</evidence>
<evidence type="ECO:0000256" key="5">
    <source>
        <dbReference type="SAM" id="MobiDB-lite"/>
    </source>
</evidence>
<evidence type="ECO:0007829" key="6">
    <source>
        <dbReference type="PDB" id="1BW5"/>
    </source>
</evidence>
<accession>P50480</accession>
<comment type="function">
    <text evidence="1">Transcriptional factor that defines subclasses of motoneurons that segregate into columns in the spinal cord and select distinct axon pathways.</text>
</comment>
<comment type="subunit">
    <text evidence="1">Interacts with LHX4.</text>
</comment>
<comment type="subcellular location">
    <subcellularLocation>
        <location>Nucleus</location>
    </subcellularLocation>
</comment>
<name>ISL2_RAT</name>
<gene>
    <name type="primary">Isl2</name>
    <name type="synonym">Isl-2</name>
</gene>
<protein>
    <recommendedName>
        <fullName>Insulin gene enhancer protein ISL-2</fullName>
        <shortName>Islet-2</shortName>
    </recommendedName>
</protein>
<proteinExistence type="evidence at protein level"/>
<dbReference type="EMBL" id="L35571">
    <property type="protein sequence ID" value="AAA62161.1"/>
    <property type="molecule type" value="mRNA"/>
</dbReference>
<dbReference type="PIR" id="A55198">
    <property type="entry name" value="A55198"/>
</dbReference>
<dbReference type="RefSeq" id="NP_065204.1">
    <property type="nucleotide sequence ID" value="NM_020471.1"/>
</dbReference>
<dbReference type="PDB" id="1BW5">
    <property type="method" value="NMR"/>
    <property type="chains" value="A=191-255"/>
</dbReference>
<dbReference type="PDBsum" id="1BW5"/>
<dbReference type="BMRB" id="P50480"/>
<dbReference type="SMR" id="P50480"/>
<dbReference type="FunCoup" id="P50480">
    <property type="interactions" value="50"/>
</dbReference>
<dbReference type="STRING" id="10116.ENSRNOP00000021074"/>
<dbReference type="PhosphoSitePlus" id="P50480"/>
<dbReference type="PaxDb" id="10116-ENSRNOP00000021074"/>
<dbReference type="GeneID" id="57233"/>
<dbReference type="KEGG" id="rno:57233"/>
<dbReference type="UCSC" id="RGD:621849">
    <property type="organism name" value="rat"/>
</dbReference>
<dbReference type="AGR" id="RGD:621849"/>
<dbReference type="CTD" id="64843"/>
<dbReference type="RGD" id="621849">
    <property type="gene designation" value="Isl2"/>
</dbReference>
<dbReference type="eggNOG" id="KOG0490">
    <property type="taxonomic scope" value="Eukaryota"/>
</dbReference>
<dbReference type="InParanoid" id="P50480"/>
<dbReference type="PhylomeDB" id="P50480"/>
<dbReference type="EvolutionaryTrace" id="P50480"/>
<dbReference type="PRO" id="PR:P50480"/>
<dbReference type="Proteomes" id="UP000002494">
    <property type="component" value="Unplaced"/>
</dbReference>
<dbReference type="GO" id="GO:0005634">
    <property type="term" value="C:nucleus"/>
    <property type="evidence" value="ECO:0000266"/>
    <property type="project" value="RGD"/>
</dbReference>
<dbReference type="GO" id="GO:0000987">
    <property type="term" value="F:cis-regulatory region sequence-specific DNA binding"/>
    <property type="evidence" value="ECO:0000318"/>
    <property type="project" value="GO_Central"/>
</dbReference>
<dbReference type="GO" id="GO:0000981">
    <property type="term" value="F:DNA-binding transcription factor activity, RNA polymerase II-specific"/>
    <property type="evidence" value="ECO:0000318"/>
    <property type="project" value="GO_Central"/>
</dbReference>
<dbReference type="GO" id="GO:0046872">
    <property type="term" value="F:metal ion binding"/>
    <property type="evidence" value="ECO:0007669"/>
    <property type="project" value="UniProtKB-KW"/>
</dbReference>
<dbReference type="GO" id="GO:1990837">
    <property type="term" value="F:sequence-specific double-stranded DNA binding"/>
    <property type="evidence" value="ECO:0000266"/>
    <property type="project" value="RGD"/>
</dbReference>
<dbReference type="GO" id="GO:0007409">
    <property type="term" value="P:axonogenesis"/>
    <property type="evidence" value="ECO:0000318"/>
    <property type="project" value="GO_Central"/>
</dbReference>
<dbReference type="GO" id="GO:0045665">
    <property type="term" value="P:negative regulation of neuron differentiation"/>
    <property type="evidence" value="ECO:0000266"/>
    <property type="project" value="RGD"/>
</dbReference>
<dbReference type="GO" id="GO:0030182">
    <property type="term" value="P:neuron differentiation"/>
    <property type="evidence" value="ECO:0000266"/>
    <property type="project" value="RGD"/>
</dbReference>
<dbReference type="GO" id="GO:0048663">
    <property type="term" value="P:neuron fate commitment"/>
    <property type="evidence" value="ECO:0000266"/>
    <property type="project" value="RGD"/>
</dbReference>
<dbReference type="GO" id="GO:0048665">
    <property type="term" value="P:neuron fate specification"/>
    <property type="evidence" value="ECO:0000318"/>
    <property type="project" value="GO_Central"/>
</dbReference>
<dbReference type="GO" id="GO:0045944">
    <property type="term" value="P:positive regulation of transcription by RNA polymerase II"/>
    <property type="evidence" value="ECO:0000318"/>
    <property type="project" value="GO_Central"/>
</dbReference>
<dbReference type="GO" id="GO:0031290">
    <property type="term" value="P:retinal ganglion cell axon guidance"/>
    <property type="evidence" value="ECO:0000266"/>
    <property type="project" value="RGD"/>
</dbReference>
<dbReference type="GO" id="GO:0021520">
    <property type="term" value="P:spinal cord motor neuron cell fate specification"/>
    <property type="evidence" value="ECO:0000266"/>
    <property type="project" value="RGD"/>
</dbReference>
<dbReference type="GO" id="GO:0021524">
    <property type="term" value="P:visceral motor neuron differentiation"/>
    <property type="evidence" value="ECO:0000266"/>
    <property type="project" value="RGD"/>
</dbReference>
<dbReference type="CDD" id="cd00086">
    <property type="entry name" value="homeodomain"/>
    <property type="match status" value="1"/>
</dbReference>
<dbReference type="CDD" id="cd09366">
    <property type="entry name" value="LIM1_Isl"/>
    <property type="match status" value="1"/>
</dbReference>
<dbReference type="CDD" id="cd09471">
    <property type="entry name" value="LIM2_Isl2"/>
    <property type="match status" value="1"/>
</dbReference>
<dbReference type="FunFam" id="2.10.110.10:FF:000034">
    <property type="entry name" value="Insulin gene enhancer protein ISL"/>
    <property type="match status" value="1"/>
</dbReference>
<dbReference type="FunFam" id="1.10.10.60:FF:000041">
    <property type="entry name" value="insulin gene enhancer protein ISL-1"/>
    <property type="match status" value="1"/>
</dbReference>
<dbReference type="FunFam" id="2.10.110.10:FF:000068">
    <property type="entry name" value="Insulin gene enhancer protein ISL-2"/>
    <property type="match status" value="1"/>
</dbReference>
<dbReference type="Gene3D" id="2.10.110.10">
    <property type="entry name" value="Cysteine Rich Protein"/>
    <property type="match status" value="2"/>
</dbReference>
<dbReference type="Gene3D" id="1.10.10.60">
    <property type="entry name" value="Homeodomain-like"/>
    <property type="match status" value="1"/>
</dbReference>
<dbReference type="InterPro" id="IPR001356">
    <property type="entry name" value="HD"/>
</dbReference>
<dbReference type="InterPro" id="IPR017970">
    <property type="entry name" value="Homeobox_CS"/>
</dbReference>
<dbReference type="InterPro" id="IPR009057">
    <property type="entry name" value="Homeodomain-like_sf"/>
</dbReference>
<dbReference type="InterPro" id="IPR047169">
    <property type="entry name" value="ISL1/2-like"/>
</dbReference>
<dbReference type="InterPro" id="IPR047244">
    <property type="entry name" value="ISL1/2-like_LIM1"/>
</dbReference>
<dbReference type="InterPro" id="IPR001781">
    <property type="entry name" value="Znf_LIM"/>
</dbReference>
<dbReference type="PANTHER" id="PTHR24204">
    <property type="entry name" value="INSULIN GENE ENHANCER PROTEIN"/>
    <property type="match status" value="1"/>
</dbReference>
<dbReference type="PANTHER" id="PTHR24204:SF2">
    <property type="entry name" value="INSULIN GENE ENHANCER PROTEIN ISL-2"/>
    <property type="match status" value="1"/>
</dbReference>
<dbReference type="Pfam" id="PF00046">
    <property type="entry name" value="Homeodomain"/>
    <property type="match status" value="1"/>
</dbReference>
<dbReference type="Pfam" id="PF00412">
    <property type="entry name" value="LIM"/>
    <property type="match status" value="2"/>
</dbReference>
<dbReference type="SMART" id="SM00389">
    <property type="entry name" value="HOX"/>
    <property type="match status" value="1"/>
</dbReference>
<dbReference type="SMART" id="SM00132">
    <property type="entry name" value="LIM"/>
    <property type="match status" value="2"/>
</dbReference>
<dbReference type="SUPFAM" id="SSF57716">
    <property type="entry name" value="Glucocorticoid receptor-like (DNA-binding domain)"/>
    <property type="match status" value="2"/>
</dbReference>
<dbReference type="SUPFAM" id="SSF46689">
    <property type="entry name" value="Homeodomain-like"/>
    <property type="match status" value="1"/>
</dbReference>
<dbReference type="PROSITE" id="PS00027">
    <property type="entry name" value="HOMEOBOX_1"/>
    <property type="match status" value="1"/>
</dbReference>
<dbReference type="PROSITE" id="PS50071">
    <property type="entry name" value="HOMEOBOX_2"/>
    <property type="match status" value="1"/>
</dbReference>
<dbReference type="PROSITE" id="PS00478">
    <property type="entry name" value="LIM_DOMAIN_1"/>
    <property type="match status" value="2"/>
</dbReference>
<dbReference type="PROSITE" id="PS50023">
    <property type="entry name" value="LIM_DOMAIN_2"/>
    <property type="match status" value="2"/>
</dbReference>
<keyword id="KW-0002">3D-structure</keyword>
<keyword id="KW-0217">Developmental protein</keyword>
<keyword id="KW-0238">DNA-binding</keyword>
<keyword id="KW-0371">Homeobox</keyword>
<keyword id="KW-0440">LIM domain</keyword>
<keyword id="KW-0479">Metal-binding</keyword>
<keyword id="KW-0539">Nucleus</keyword>
<keyword id="KW-0597">Phosphoprotein</keyword>
<keyword id="KW-1185">Reference proteome</keyword>
<keyword id="KW-0677">Repeat</keyword>
<keyword id="KW-0862">Zinc</keyword>